<name>ESR1_PAGMA</name>
<sequence length="581" mass="63461">MYPEDSRGSGGVATVDFLEGTYDYAAPTPAPTPLYSHSTPGYYSAPLDAHGPPSDGSLQSLGSGPNSPLVFVPSSPRLSPFMHPPTHHYLETTSTPVYRSSVPSSQQSVSREDQCGTSDDSYSVGESGAGALAAGFEIAKEMRFCAVCSDYASGYHYGVWSCEGCKAFFKRSIQGHNDYMCPATNQCTIDRNRRKSCQACRLRKCYEVGMMKGGMRKDRGRVLRRDKQRTGTSDRDKASKGLEHRTAPPQDRRKHISSSAGGGGGKSSMISMPPDQVLLLLQGAEPPMLCSRQKLNRPYTEVTMMTLLTSMADKELVHMIAWAKKLPGFLQLSLHDQVQLLESSWLEVLMIGLIWRSIHCPGKLIFAQDLILDRSEGDCVEGMAEIFDMLLATASRFRMLKLKPEEFVCLKAIILLNSGAFSFCTGTMEPLHDGAAVQNMLDTITDALIHHINQSGCSAQQQSRRQAQLLLLLSHIRHMSNKGMEHLYSMKCKNKVPLYDLLLEMLDAHRIHRADRPAETWSQADREPPFTSRNSSGGGGGGGGGSSSAGSTSGPRVSHESPTSPGVLQYGGSRSECTHIL</sequence>
<comment type="function">
    <text>The steroid hormones and their receptors are involved in the regulation of eukaryotic gene expression and affect cellular proliferation and differentiation in target tissues.</text>
</comment>
<comment type="subunit">
    <text evidence="1">Binds DNA as a homodimer. Can form a heterodimer with ER-beta (By similarity).</text>
</comment>
<comment type="subcellular location">
    <subcellularLocation>
        <location>Nucleus</location>
    </subcellularLocation>
</comment>
<comment type="domain">
    <text>Composed of three domains: a modulating N-terminal domain, a DNA-binding domain and a C-terminal ligand-binding domain.</text>
</comment>
<comment type="similarity">
    <text evidence="5">Belongs to the nuclear hormone receptor family. NR3 subfamily.</text>
</comment>
<keyword id="KW-0238">DNA-binding</keyword>
<keyword id="KW-0446">Lipid-binding</keyword>
<keyword id="KW-0479">Metal-binding</keyword>
<keyword id="KW-0539">Nucleus</keyword>
<keyword id="KW-0675">Receptor</keyword>
<keyword id="KW-0754">Steroid-binding</keyword>
<keyword id="KW-0804">Transcription</keyword>
<keyword id="KW-0805">Transcription regulation</keyword>
<keyword id="KW-0862">Zinc</keyword>
<keyword id="KW-0863">Zinc-finger</keyword>
<proteinExistence type="evidence at transcript level"/>
<organism>
    <name type="scientific">Pagrus major</name>
    <name type="common">Red sea bream</name>
    <name type="synonym">Chrysophrys major</name>
    <dbReference type="NCBI Taxonomy" id="143350"/>
    <lineage>
        <taxon>Eukaryota</taxon>
        <taxon>Metazoa</taxon>
        <taxon>Chordata</taxon>
        <taxon>Craniata</taxon>
        <taxon>Vertebrata</taxon>
        <taxon>Euteleostomi</taxon>
        <taxon>Actinopterygii</taxon>
        <taxon>Neopterygii</taxon>
        <taxon>Teleostei</taxon>
        <taxon>Neoteleostei</taxon>
        <taxon>Acanthomorphata</taxon>
        <taxon>Eupercaria</taxon>
        <taxon>Spariformes</taxon>
        <taxon>Sparidae</taxon>
        <taxon>Pagrus</taxon>
    </lineage>
</organism>
<evidence type="ECO:0000250" key="1"/>
<evidence type="ECO:0000255" key="2">
    <source>
        <dbReference type="PROSITE-ProRule" id="PRU00407"/>
    </source>
</evidence>
<evidence type="ECO:0000255" key="3">
    <source>
        <dbReference type="PROSITE-ProRule" id="PRU01189"/>
    </source>
</evidence>
<evidence type="ECO:0000256" key="4">
    <source>
        <dbReference type="SAM" id="MobiDB-lite"/>
    </source>
</evidence>
<evidence type="ECO:0000305" key="5"/>
<protein>
    <recommendedName>
        <fullName>Estrogen receptor</fullName>
        <shortName>ER</shortName>
    </recommendedName>
    <alternativeName>
        <fullName>ER-alpha</fullName>
    </alternativeName>
    <alternativeName>
        <fullName>Estradiol receptor</fullName>
    </alternativeName>
    <alternativeName>
        <fullName>Nuclear receptor subfamily 3 group A member 1</fullName>
    </alternativeName>
</protein>
<feature type="chain" id="PRO_0000053635" description="Estrogen receptor">
    <location>
        <begin position="1"/>
        <end position="581"/>
    </location>
</feature>
<feature type="domain" description="NR LBD" evidence="3">
    <location>
        <begin position="273"/>
        <end position="509"/>
    </location>
</feature>
<feature type="DNA-binding region" description="Nuclear receptor" evidence="2">
    <location>
        <begin position="145"/>
        <end position="210"/>
    </location>
</feature>
<feature type="zinc finger region" description="NR C4-type" evidence="2">
    <location>
        <begin position="145"/>
        <end position="165"/>
    </location>
</feature>
<feature type="zinc finger region" description="NR C4-type" evidence="2">
    <location>
        <begin position="181"/>
        <end position="205"/>
    </location>
</feature>
<feature type="region of interest" description="Modulating" evidence="1">
    <location>
        <begin position="1"/>
        <end position="144"/>
    </location>
</feature>
<feature type="region of interest" description="Disordered" evidence="4">
    <location>
        <begin position="45"/>
        <end position="66"/>
    </location>
</feature>
<feature type="region of interest" description="Disordered" evidence="4">
    <location>
        <begin position="96"/>
        <end position="122"/>
    </location>
</feature>
<feature type="region of interest" description="Hinge">
    <location>
        <begin position="211"/>
        <end position="272"/>
    </location>
</feature>
<feature type="region of interest" description="Disordered" evidence="4">
    <location>
        <begin position="216"/>
        <end position="268"/>
    </location>
</feature>
<feature type="region of interest" description="Disordered" evidence="4">
    <location>
        <begin position="516"/>
        <end position="581"/>
    </location>
</feature>
<feature type="compositionally biased region" description="Polar residues" evidence="4">
    <location>
        <begin position="56"/>
        <end position="66"/>
    </location>
</feature>
<feature type="compositionally biased region" description="Low complexity" evidence="4">
    <location>
        <begin position="100"/>
        <end position="109"/>
    </location>
</feature>
<feature type="compositionally biased region" description="Basic and acidic residues" evidence="4">
    <location>
        <begin position="216"/>
        <end position="246"/>
    </location>
</feature>
<feature type="compositionally biased region" description="Basic and acidic residues" evidence="4">
    <location>
        <begin position="516"/>
        <end position="528"/>
    </location>
</feature>
<feature type="compositionally biased region" description="Gly residues" evidence="4">
    <location>
        <begin position="536"/>
        <end position="547"/>
    </location>
</feature>
<accession>O42132</accession>
<reference key="1">
    <citation type="journal article" date="1998" name="Fish. Sci.">
        <title>Sequence and expression of a cDNA encoding the red seabream estrogen receptor.</title>
        <authorList>
            <person name="Touhata K."/>
            <person name="Kinoshita M."/>
            <person name="Toyohara H."/>
            <person name="Sakaguchi M."/>
        </authorList>
    </citation>
    <scope>NUCLEOTIDE SEQUENCE [MRNA]</scope>
    <source>
        <tissue>Liver</tissue>
    </source>
</reference>
<dbReference type="EMBL" id="AB007453">
    <property type="protein sequence ID" value="BAA22517.1"/>
    <property type="molecule type" value="mRNA"/>
</dbReference>
<dbReference type="SMR" id="O42132"/>
<dbReference type="GO" id="GO:0005634">
    <property type="term" value="C:nucleus"/>
    <property type="evidence" value="ECO:0000250"/>
    <property type="project" value="UniProtKB"/>
</dbReference>
<dbReference type="GO" id="GO:0042562">
    <property type="term" value="F:hormone binding"/>
    <property type="evidence" value="ECO:0007669"/>
    <property type="project" value="UniProtKB-ARBA"/>
</dbReference>
<dbReference type="GO" id="GO:0030284">
    <property type="term" value="F:nuclear estrogen receptor activity"/>
    <property type="evidence" value="ECO:0007669"/>
    <property type="project" value="InterPro"/>
</dbReference>
<dbReference type="GO" id="GO:0043565">
    <property type="term" value="F:sequence-specific DNA binding"/>
    <property type="evidence" value="ECO:0007669"/>
    <property type="project" value="InterPro"/>
</dbReference>
<dbReference type="GO" id="GO:0005496">
    <property type="term" value="F:steroid binding"/>
    <property type="evidence" value="ECO:0007669"/>
    <property type="project" value="UniProtKB-KW"/>
</dbReference>
<dbReference type="GO" id="GO:0008270">
    <property type="term" value="F:zinc ion binding"/>
    <property type="evidence" value="ECO:0007669"/>
    <property type="project" value="UniProtKB-KW"/>
</dbReference>
<dbReference type="CDD" id="cd07171">
    <property type="entry name" value="NR_DBD_ER"/>
    <property type="match status" value="1"/>
</dbReference>
<dbReference type="FunFam" id="1.10.565.10:FF:000010">
    <property type="entry name" value="Estrogen receptor"/>
    <property type="match status" value="1"/>
</dbReference>
<dbReference type="FunFam" id="3.30.50.10:FF:000014">
    <property type="entry name" value="Estrogen receptor beta"/>
    <property type="match status" value="1"/>
</dbReference>
<dbReference type="Gene3D" id="3.30.50.10">
    <property type="entry name" value="Erythroid Transcription Factor GATA-1, subunit A"/>
    <property type="match status" value="1"/>
</dbReference>
<dbReference type="Gene3D" id="1.10.565.10">
    <property type="entry name" value="Retinoid X Receptor"/>
    <property type="match status" value="1"/>
</dbReference>
<dbReference type="InterPro" id="IPR024178">
    <property type="entry name" value="Est_rcpt/est-rel_rcp"/>
</dbReference>
<dbReference type="InterPro" id="IPR001292">
    <property type="entry name" value="Estr_rcpt"/>
</dbReference>
<dbReference type="InterPro" id="IPR046944">
    <property type="entry name" value="Estr_rcpt_N"/>
</dbReference>
<dbReference type="InterPro" id="IPR035500">
    <property type="entry name" value="NHR-like_dom_sf"/>
</dbReference>
<dbReference type="InterPro" id="IPR000536">
    <property type="entry name" value="Nucl_hrmn_rcpt_lig-bd"/>
</dbReference>
<dbReference type="InterPro" id="IPR050200">
    <property type="entry name" value="Nuclear_hormone_rcpt_NR3"/>
</dbReference>
<dbReference type="InterPro" id="IPR001723">
    <property type="entry name" value="Nuclear_hrmn_rcpt"/>
</dbReference>
<dbReference type="InterPro" id="IPR001628">
    <property type="entry name" value="Znf_hrmn_rcpt"/>
</dbReference>
<dbReference type="InterPro" id="IPR013088">
    <property type="entry name" value="Znf_NHR/GATA"/>
</dbReference>
<dbReference type="PANTHER" id="PTHR48092">
    <property type="entry name" value="KNIRPS-RELATED PROTEIN-RELATED"/>
    <property type="match status" value="1"/>
</dbReference>
<dbReference type="Pfam" id="PF00104">
    <property type="entry name" value="Hormone_recep"/>
    <property type="match status" value="1"/>
</dbReference>
<dbReference type="Pfam" id="PF02159">
    <property type="entry name" value="Oest_recep"/>
    <property type="match status" value="1"/>
</dbReference>
<dbReference type="Pfam" id="PF00105">
    <property type="entry name" value="zf-C4"/>
    <property type="match status" value="1"/>
</dbReference>
<dbReference type="PIRSF" id="PIRSF500101">
    <property type="entry name" value="ER-a"/>
    <property type="match status" value="1"/>
</dbReference>
<dbReference type="PIRSF" id="PIRSF002527">
    <property type="entry name" value="ER-like_NR"/>
    <property type="match status" value="1"/>
</dbReference>
<dbReference type="PRINTS" id="PR00398">
    <property type="entry name" value="STRDHORMONER"/>
</dbReference>
<dbReference type="PRINTS" id="PR00047">
    <property type="entry name" value="STROIDFINGER"/>
</dbReference>
<dbReference type="SMART" id="SM00430">
    <property type="entry name" value="HOLI"/>
    <property type="match status" value="1"/>
</dbReference>
<dbReference type="SMART" id="SM00399">
    <property type="entry name" value="ZnF_C4"/>
    <property type="match status" value="1"/>
</dbReference>
<dbReference type="SUPFAM" id="SSF57716">
    <property type="entry name" value="Glucocorticoid receptor-like (DNA-binding domain)"/>
    <property type="match status" value="1"/>
</dbReference>
<dbReference type="SUPFAM" id="SSF48508">
    <property type="entry name" value="Nuclear receptor ligand-binding domain"/>
    <property type="match status" value="1"/>
</dbReference>
<dbReference type="PROSITE" id="PS51843">
    <property type="entry name" value="NR_LBD"/>
    <property type="match status" value="1"/>
</dbReference>
<dbReference type="PROSITE" id="PS00031">
    <property type="entry name" value="NUCLEAR_REC_DBD_1"/>
    <property type="match status" value="1"/>
</dbReference>
<dbReference type="PROSITE" id="PS51030">
    <property type="entry name" value="NUCLEAR_REC_DBD_2"/>
    <property type="match status" value="1"/>
</dbReference>
<gene>
    <name type="primary">esr1</name>
    <name type="synonym">esr</name>
    <name type="synonym">nr3a1</name>
</gene>